<feature type="chain" id="PRO_1000196378" description="Small ribosomal subunit protein bS16">
    <location>
        <begin position="1"/>
        <end position="83"/>
    </location>
</feature>
<name>RS16_CUPTR</name>
<evidence type="ECO:0000255" key="1">
    <source>
        <dbReference type="HAMAP-Rule" id="MF_00385"/>
    </source>
</evidence>
<evidence type="ECO:0000305" key="2"/>
<reference key="1">
    <citation type="journal article" date="2008" name="Genome Res.">
        <title>Genome sequence of the beta-rhizobium Cupriavidus taiwanensis and comparative genomics of rhizobia.</title>
        <authorList>
            <person name="Amadou C."/>
            <person name="Pascal G."/>
            <person name="Mangenot S."/>
            <person name="Glew M."/>
            <person name="Bontemps C."/>
            <person name="Capela D."/>
            <person name="Carrere S."/>
            <person name="Cruveiller S."/>
            <person name="Dossat C."/>
            <person name="Lajus A."/>
            <person name="Marchetti M."/>
            <person name="Poinsot V."/>
            <person name="Rouy Z."/>
            <person name="Servin B."/>
            <person name="Saad M."/>
            <person name="Schenowitz C."/>
            <person name="Barbe V."/>
            <person name="Batut J."/>
            <person name="Medigue C."/>
            <person name="Masson-Boivin C."/>
        </authorList>
    </citation>
    <scope>NUCLEOTIDE SEQUENCE [LARGE SCALE GENOMIC DNA]</scope>
    <source>
        <strain>DSM 17343 / BCRC 17206 / CCUG 44338 / CIP 107171 / LMG 19424 / R1</strain>
    </source>
</reference>
<organism>
    <name type="scientific">Cupriavidus taiwanensis (strain DSM 17343 / BCRC 17206 / CCUG 44338 / CIP 107171 / LMG 19424 / R1)</name>
    <name type="common">Ralstonia taiwanensis (strain LMG 19424)</name>
    <dbReference type="NCBI Taxonomy" id="977880"/>
    <lineage>
        <taxon>Bacteria</taxon>
        <taxon>Pseudomonadati</taxon>
        <taxon>Pseudomonadota</taxon>
        <taxon>Betaproteobacteria</taxon>
        <taxon>Burkholderiales</taxon>
        <taxon>Burkholderiaceae</taxon>
        <taxon>Cupriavidus</taxon>
    </lineage>
</organism>
<sequence>MVVIRLARGGSKKRPFFNIVATDSRSRRDGRFIERVGFYNPLAAEGEEGLRLAQDRLAYWQGVGAQLSPTVARLVKQGAKAAA</sequence>
<proteinExistence type="inferred from homology"/>
<keyword id="KW-0687">Ribonucleoprotein</keyword>
<keyword id="KW-0689">Ribosomal protein</keyword>
<comment type="similarity">
    <text evidence="1">Belongs to the bacterial ribosomal protein bS16 family.</text>
</comment>
<accession>B3R396</accession>
<protein>
    <recommendedName>
        <fullName evidence="1">Small ribosomal subunit protein bS16</fullName>
    </recommendedName>
    <alternativeName>
        <fullName evidence="2">30S ribosomal protein S16</fullName>
    </alternativeName>
</protein>
<dbReference type="EMBL" id="CU633749">
    <property type="protein sequence ID" value="CAQ68777.1"/>
    <property type="molecule type" value="Genomic_DNA"/>
</dbReference>
<dbReference type="RefSeq" id="WP_012352114.1">
    <property type="nucleotide sequence ID" value="NC_010528.1"/>
</dbReference>
<dbReference type="SMR" id="B3R396"/>
<dbReference type="GeneID" id="29760459"/>
<dbReference type="KEGG" id="cti:RALTA_A0805"/>
<dbReference type="eggNOG" id="COG0228">
    <property type="taxonomic scope" value="Bacteria"/>
</dbReference>
<dbReference type="HOGENOM" id="CLU_100590_5_1_4"/>
<dbReference type="BioCyc" id="CTAI977880:RALTA_RS03885-MONOMER"/>
<dbReference type="Proteomes" id="UP000001692">
    <property type="component" value="Chromosome 1"/>
</dbReference>
<dbReference type="GO" id="GO:0005737">
    <property type="term" value="C:cytoplasm"/>
    <property type="evidence" value="ECO:0007669"/>
    <property type="project" value="UniProtKB-ARBA"/>
</dbReference>
<dbReference type="GO" id="GO:0015935">
    <property type="term" value="C:small ribosomal subunit"/>
    <property type="evidence" value="ECO:0007669"/>
    <property type="project" value="TreeGrafter"/>
</dbReference>
<dbReference type="GO" id="GO:0003735">
    <property type="term" value="F:structural constituent of ribosome"/>
    <property type="evidence" value="ECO:0007669"/>
    <property type="project" value="InterPro"/>
</dbReference>
<dbReference type="GO" id="GO:0006412">
    <property type="term" value="P:translation"/>
    <property type="evidence" value="ECO:0007669"/>
    <property type="project" value="UniProtKB-UniRule"/>
</dbReference>
<dbReference type="Gene3D" id="3.30.1320.10">
    <property type="match status" value="1"/>
</dbReference>
<dbReference type="HAMAP" id="MF_00385">
    <property type="entry name" value="Ribosomal_bS16"/>
    <property type="match status" value="1"/>
</dbReference>
<dbReference type="InterPro" id="IPR000307">
    <property type="entry name" value="Ribosomal_bS16"/>
</dbReference>
<dbReference type="InterPro" id="IPR023803">
    <property type="entry name" value="Ribosomal_bS16_dom_sf"/>
</dbReference>
<dbReference type="NCBIfam" id="TIGR00002">
    <property type="entry name" value="S16"/>
    <property type="match status" value="1"/>
</dbReference>
<dbReference type="PANTHER" id="PTHR12919">
    <property type="entry name" value="30S RIBOSOMAL PROTEIN S16"/>
    <property type="match status" value="1"/>
</dbReference>
<dbReference type="PANTHER" id="PTHR12919:SF20">
    <property type="entry name" value="SMALL RIBOSOMAL SUBUNIT PROTEIN BS16M"/>
    <property type="match status" value="1"/>
</dbReference>
<dbReference type="Pfam" id="PF00886">
    <property type="entry name" value="Ribosomal_S16"/>
    <property type="match status" value="1"/>
</dbReference>
<dbReference type="SUPFAM" id="SSF54565">
    <property type="entry name" value="Ribosomal protein S16"/>
    <property type="match status" value="1"/>
</dbReference>
<gene>
    <name evidence="1" type="primary">rpsP</name>
    <name type="ordered locus">RALTA_A0805</name>
</gene>